<accession>Q01222</accession>
<accession>Q76ZK6</accession>
<protein>
    <recommendedName>
        <fullName>Ankyrin repeat protein B19</fullName>
    </recommendedName>
</protein>
<feature type="chain" id="PRO_0000067090" description="Ankyrin repeat protein B19">
    <location>
        <begin position="1"/>
        <end position="574"/>
    </location>
</feature>
<feature type="repeat" description="ANK 1">
    <location>
        <begin position="56"/>
        <end position="87"/>
    </location>
</feature>
<feature type="repeat" description="ANK 2">
    <location>
        <begin position="135"/>
        <end position="164"/>
    </location>
</feature>
<feature type="repeat" description="ANK 3">
    <location>
        <begin position="167"/>
        <end position="213"/>
    </location>
</feature>
<feature type="repeat" description="ANK 4">
    <location>
        <begin position="217"/>
        <end position="249"/>
    </location>
</feature>
<feature type="repeat" description="ANK 5">
    <location>
        <begin position="253"/>
        <end position="285"/>
    </location>
</feature>
<feature type="repeat" description="ANK 6">
    <location>
        <begin position="327"/>
        <end position="356"/>
    </location>
</feature>
<feature type="domain" description="F-box" evidence="1">
    <location>
        <begin position="541"/>
        <end position="574"/>
    </location>
</feature>
<evidence type="ECO:0000255" key="1">
    <source>
        <dbReference type="PROSITE-ProRule" id="PRU00080"/>
    </source>
</evidence>
<evidence type="ECO:0000305" key="2"/>
<organism>
    <name type="scientific">Vaccinia virus (strain Western Reserve)</name>
    <name type="common">VACV</name>
    <name type="synonym">Vaccinia virus (strain WR)</name>
    <dbReference type="NCBI Taxonomy" id="10254"/>
    <lineage>
        <taxon>Viruses</taxon>
        <taxon>Varidnaviria</taxon>
        <taxon>Bamfordvirae</taxon>
        <taxon>Nucleocytoviricota</taxon>
        <taxon>Pokkesviricetes</taxon>
        <taxon>Chitovirales</taxon>
        <taxon>Poxviridae</taxon>
        <taxon>Chordopoxvirinae</taxon>
        <taxon>Orthopoxvirus</taxon>
        <taxon>Vaccinia virus</taxon>
    </lineage>
</organism>
<sequence length="574" mass="67987">MSRRLIYVLNINRESTHKIQENEIYTYFSHCNIDHTSTELDFVVKNYDLNRRQPVTGYTALHCYLYNNYFTNDVLKILLNHGVDVTMKTSSGRMPVYILLTRCCNISHDVVIDMIDKDKNHLLHRDYSNLLLEYIKSRYMLLKEEDIDENIVSTLLDKGIDPNFKQDGYTALHYYYLCLAHVYKPGECRKPITIKKAKRIISLFIQHGANLNALDNCGNTPFHLYLSIEMCNNIHMTKMLLTFNPNFEICNNHGLTPILCYITSDYIQHDILVMLIHHYETNVGEMPIDERRIIVFEFIKTYSTRPADSITYLMNRFKNIDIYTRYEGKTLLHVACEYNNTHVIDYLIRINGDINALTDNNKHATQLIIDNKENSPYTINCLLYILRYIVDKNVIRSLVDQLPSLPIFDIKSFEKFISYCILLDDTFYNRHVRNRDSKTYRYAFSKYMSFDKYDGIITKCHKETILLKLSTVLDTTLYAVLRCHNSKKLRRYLTELKKYNNDKSFKIYSNIMNERYLNVYYKDMYVSKVYDKLFPVFTDKNCLLTLLPSEIIYEILYMLTINDLYNISYPPTKV</sequence>
<comment type="similarity">
    <text evidence="2">Belongs to the poxvirinae B18 protein family.</text>
</comment>
<organismHost>
    <name type="scientific">Bos taurus</name>
    <name type="common">Bovine</name>
    <dbReference type="NCBI Taxonomy" id="9913"/>
</organismHost>
<gene>
    <name type="ordered locus">VACWR199</name>
    <name type="ORF">B19R</name>
</gene>
<reference key="1">
    <citation type="journal article" date="1991" name="J. Gen. Virol.">
        <title>Nucleotide sequence of 42 kbp of vaccinia virus strain WR from near the right inverted terminal repeat.</title>
        <authorList>
            <person name="Smith G.L."/>
            <person name="Chan Y.S."/>
            <person name="Howard S.T."/>
        </authorList>
    </citation>
    <scope>NUCLEOTIDE SEQUENCE [GENOMIC DNA]</scope>
</reference>
<reference key="2">
    <citation type="submission" date="2003-02" db="EMBL/GenBank/DDBJ databases">
        <title>Sequencing of the coding region of Vaccinia-WR to an average 9-fold redundancy and an error rate of 0.16/10kb.</title>
        <authorList>
            <person name="Esposito J.J."/>
            <person name="Frace A.M."/>
            <person name="Sammons S.A."/>
            <person name="Olsen-Rasmussen M."/>
            <person name="Osborne J."/>
            <person name="Wohlhueter R."/>
        </authorList>
    </citation>
    <scope>NUCLEOTIDE SEQUENCE [LARGE SCALE GENOMIC DNA]</scope>
</reference>
<keyword id="KW-0040">ANK repeat</keyword>
<keyword id="KW-1185">Reference proteome</keyword>
<keyword id="KW-0677">Repeat</keyword>
<dbReference type="EMBL" id="D11079">
    <property type="protein sequence ID" value="BAA01847.1"/>
    <property type="molecule type" value="Genomic_DNA"/>
</dbReference>
<dbReference type="EMBL" id="AY243312">
    <property type="protein sequence ID" value="AAO89478.1"/>
    <property type="molecule type" value="Genomic_DNA"/>
</dbReference>
<dbReference type="PIR" id="JQ1811">
    <property type="entry name" value="JQ1811"/>
</dbReference>
<dbReference type="SMR" id="Q01222"/>
<dbReference type="DNASU" id="3707576"/>
<dbReference type="KEGG" id="vg:3707576"/>
<dbReference type="PRO" id="PR:Q01222"/>
<dbReference type="Proteomes" id="UP000000344">
    <property type="component" value="Genome"/>
</dbReference>
<dbReference type="Gene3D" id="1.25.40.20">
    <property type="entry name" value="Ankyrin repeat-containing domain"/>
    <property type="match status" value="3"/>
</dbReference>
<dbReference type="InterPro" id="IPR051637">
    <property type="entry name" value="Ank_repeat_dom-contain_49"/>
</dbReference>
<dbReference type="InterPro" id="IPR002110">
    <property type="entry name" value="Ankyrin_rpt"/>
</dbReference>
<dbReference type="InterPro" id="IPR036770">
    <property type="entry name" value="Ankyrin_rpt-contain_sf"/>
</dbReference>
<dbReference type="InterPro" id="IPR001810">
    <property type="entry name" value="F-box_dom"/>
</dbReference>
<dbReference type="InterPro" id="IPR018272">
    <property type="entry name" value="PRANC_domain"/>
</dbReference>
<dbReference type="PANTHER" id="PTHR24180">
    <property type="entry name" value="CYCLIN-DEPENDENT KINASE INHIBITOR 2C-RELATED"/>
    <property type="match status" value="1"/>
</dbReference>
<dbReference type="PANTHER" id="PTHR24180:SF45">
    <property type="entry name" value="POLY [ADP-RIBOSE] POLYMERASE TANKYRASE"/>
    <property type="match status" value="1"/>
</dbReference>
<dbReference type="Pfam" id="PF00023">
    <property type="entry name" value="Ank"/>
    <property type="match status" value="1"/>
</dbReference>
<dbReference type="Pfam" id="PF13606">
    <property type="entry name" value="Ank_3"/>
    <property type="match status" value="1"/>
</dbReference>
<dbReference type="Pfam" id="PF09372">
    <property type="entry name" value="PRANC"/>
    <property type="match status" value="1"/>
</dbReference>
<dbReference type="SMART" id="SM00248">
    <property type="entry name" value="ANK"/>
    <property type="match status" value="6"/>
</dbReference>
<dbReference type="SUPFAM" id="SSF48403">
    <property type="entry name" value="Ankyrin repeat"/>
    <property type="match status" value="1"/>
</dbReference>
<dbReference type="PROSITE" id="PS50297">
    <property type="entry name" value="ANK_REP_REGION"/>
    <property type="match status" value="1"/>
</dbReference>
<dbReference type="PROSITE" id="PS50088">
    <property type="entry name" value="ANK_REPEAT"/>
    <property type="match status" value="2"/>
</dbReference>
<dbReference type="PROSITE" id="PS50181">
    <property type="entry name" value="FBOX"/>
    <property type="match status" value="1"/>
</dbReference>
<name>B19_VACCW</name>
<proteinExistence type="inferred from homology"/>